<name>RF1_DEIDV</name>
<evidence type="ECO:0000255" key="1">
    <source>
        <dbReference type="HAMAP-Rule" id="MF_00093"/>
    </source>
</evidence>
<evidence type="ECO:0000256" key="2">
    <source>
        <dbReference type="SAM" id="MobiDB-lite"/>
    </source>
</evidence>
<organism>
    <name type="scientific">Deinococcus deserti (strain DSM 17065 / CIP 109153 / LMG 22923 / VCD115)</name>
    <dbReference type="NCBI Taxonomy" id="546414"/>
    <lineage>
        <taxon>Bacteria</taxon>
        <taxon>Thermotogati</taxon>
        <taxon>Deinococcota</taxon>
        <taxon>Deinococci</taxon>
        <taxon>Deinococcales</taxon>
        <taxon>Deinococcaceae</taxon>
        <taxon>Deinococcus</taxon>
    </lineage>
</organism>
<keyword id="KW-0963">Cytoplasm</keyword>
<keyword id="KW-0488">Methylation</keyword>
<keyword id="KW-0648">Protein biosynthesis</keyword>
<keyword id="KW-1185">Reference proteome</keyword>
<reference key="1">
    <citation type="journal article" date="2009" name="PLoS Genet.">
        <title>Alliance of proteomics and genomics to unravel the specificities of Sahara bacterium Deinococcus deserti.</title>
        <authorList>
            <person name="de Groot A."/>
            <person name="Dulermo R."/>
            <person name="Ortet P."/>
            <person name="Blanchard L."/>
            <person name="Guerin P."/>
            <person name="Fernandez B."/>
            <person name="Vacherie B."/>
            <person name="Dossat C."/>
            <person name="Jolivet E."/>
            <person name="Siguier P."/>
            <person name="Chandler M."/>
            <person name="Barakat M."/>
            <person name="Dedieu A."/>
            <person name="Barbe V."/>
            <person name="Heulin T."/>
            <person name="Sommer S."/>
            <person name="Achouak W."/>
            <person name="Armengaud J."/>
        </authorList>
    </citation>
    <scope>NUCLEOTIDE SEQUENCE [LARGE SCALE GENOMIC DNA]</scope>
    <source>
        <strain>DSM 17065 / CIP 109153 / LMG 22923 / VCD115</strain>
    </source>
</reference>
<proteinExistence type="inferred from homology"/>
<sequence>MSGRLSELAAEFGMVERALGDPAALADPQAYTRLTRRHRELLPLVTLLREREALESDLRGAQELLSDPDMRELAQNEITEATARLEQLGAELEVLLLPTDPDDLKNVILELRAGAGGAEAGLFVMDLLRMYTRYAEDRGLRLNVLEASESDLGGASKVVAEISGEFAFRAFKWERGVHRVQRVPATESQGRIHTSTVTVAVLPEAEQGEVQLDLSEVRIDVFRSQGAGGQGVNTTDSAVRAVYRAGTPDEIMVVCQDGRSQIKNREKALVVLASRLAERERAARDAQEARDRAAQVGSGERSEKIRTYNYPQNRVTDHRLEGDSKNHPLDSVMAGGLGPVVSALARDERERQLLAASAEEARDGAA</sequence>
<accession>C1CWJ1</accession>
<gene>
    <name evidence="1" type="primary">prfA</name>
    <name type="ordered locus">Deide_15940</name>
</gene>
<dbReference type="EMBL" id="CP001114">
    <property type="protein sequence ID" value="ACO46558.1"/>
    <property type="molecule type" value="Genomic_DNA"/>
</dbReference>
<dbReference type="RefSeq" id="WP_012693681.1">
    <property type="nucleotide sequence ID" value="NC_012526.1"/>
</dbReference>
<dbReference type="SMR" id="C1CWJ1"/>
<dbReference type="STRING" id="546414.Deide_15940"/>
<dbReference type="PaxDb" id="546414-Deide_15940"/>
<dbReference type="KEGG" id="ddr:Deide_15940"/>
<dbReference type="eggNOG" id="COG0216">
    <property type="taxonomic scope" value="Bacteria"/>
</dbReference>
<dbReference type="HOGENOM" id="CLU_036856_0_1_0"/>
<dbReference type="OrthoDB" id="9806673at2"/>
<dbReference type="Proteomes" id="UP000002208">
    <property type="component" value="Chromosome"/>
</dbReference>
<dbReference type="GO" id="GO:0005737">
    <property type="term" value="C:cytoplasm"/>
    <property type="evidence" value="ECO:0007669"/>
    <property type="project" value="UniProtKB-SubCell"/>
</dbReference>
<dbReference type="GO" id="GO:0016149">
    <property type="term" value="F:translation release factor activity, codon specific"/>
    <property type="evidence" value="ECO:0007669"/>
    <property type="project" value="UniProtKB-UniRule"/>
</dbReference>
<dbReference type="FunFam" id="3.30.70.1660:FF:000002">
    <property type="entry name" value="Peptide chain release factor 1"/>
    <property type="match status" value="1"/>
</dbReference>
<dbReference type="FunFam" id="3.30.160.20:FF:000040">
    <property type="entry name" value="Peptide chain release factor 2"/>
    <property type="match status" value="1"/>
</dbReference>
<dbReference type="Gene3D" id="3.30.160.20">
    <property type="match status" value="1"/>
</dbReference>
<dbReference type="Gene3D" id="3.30.70.1660">
    <property type="match status" value="2"/>
</dbReference>
<dbReference type="Gene3D" id="6.10.140.1950">
    <property type="match status" value="1"/>
</dbReference>
<dbReference type="HAMAP" id="MF_00093">
    <property type="entry name" value="Rel_fac_1"/>
    <property type="match status" value="1"/>
</dbReference>
<dbReference type="InterPro" id="IPR005139">
    <property type="entry name" value="PCRF"/>
</dbReference>
<dbReference type="InterPro" id="IPR000352">
    <property type="entry name" value="Pep_chain_release_fac_I"/>
</dbReference>
<dbReference type="InterPro" id="IPR045853">
    <property type="entry name" value="Pep_chain_release_fac_I_sf"/>
</dbReference>
<dbReference type="InterPro" id="IPR050057">
    <property type="entry name" value="Prokaryotic/Mito_RF"/>
</dbReference>
<dbReference type="InterPro" id="IPR004373">
    <property type="entry name" value="RF-1"/>
</dbReference>
<dbReference type="NCBIfam" id="NF001859">
    <property type="entry name" value="PRK00591.1"/>
    <property type="match status" value="1"/>
</dbReference>
<dbReference type="PANTHER" id="PTHR43804">
    <property type="entry name" value="LD18447P"/>
    <property type="match status" value="1"/>
</dbReference>
<dbReference type="PANTHER" id="PTHR43804:SF7">
    <property type="entry name" value="LD18447P"/>
    <property type="match status" value="1"/>
</dbReference>
<dbReference type="Pfam" id="PF03462">
    <property type="entry name" value="PCRF"/>
    <property type="match status" value="1"/>
</dbReference>
<dbReference type="Pfam" id="PF00472">
    <property type="entry name" value="RF-1"/>
    <property type="match status" value="1"/>
</dbReference>
<dbReference type="SMART" id="SM00937">
    <property type="entry name" value="PCRF"/>
    <property type="match status" value="1"/>
</dbReference>
<dbReference type="SUPFAM" id="SSF75620">
    <property type="entry name" value="Release factor"/>
    <property type="match status" value="1"/>
</dbReference>
<dbReference type="PROSITE" id="PS00745">
    <property type="entry name" value="RF_PROK_I"/>
    <property type="match status" value="1"/>
</dbReference>
<protein>
    <recommendedName>
        <fullName evidence="1">Peptide chain release factor 1</fullName>
        <shortName evidence="1">RF-1</shortName>
    </recommendedName>
</protein>
<comment type="function">
    <text evidence="1">Peptide chain release factor 1 directs the termination of translation in response to the peptide chain termination codons UAG and UAA.</text>
</comment>
<comment type="subcellular location">
    <subcellularLocation>
        <location evidence="1">Cytoplasm</location>
    </subcellularLocation>
</comment>
<comment type="PTM">
    <text evidence="1">Methylated by PrmC. Methylation increases the termination efficiency of RF1.</text>
</comment>
<comment type="similarity">
    <text evidence="1">Belongs to the prokaryotic/mitochondrial release factor family.</text>
</comment>
<feature type="chain" id="PRO_1000202688" description="Peptide chain release factor 1">
    <location>
        <begin position="1"/>
        <end position="366"/>
    </location>
</feature>
<feature type="region of interest" description="Disordered" evidence="2">
    <location>
        <begin position="283"/>
        <end position="335"/>
    </location>
</feature>
<feature type="compositionally biased region" description="Basic and acidic residues" evidence="2">
    <location>
        <begin position="283"/>
        <end position="293"/>
    </location>
</feature>
<feature type="compositionally biased region" description="Basic and acidic residues" evidence="2">
    <location>
        <begin position="315"/>
        <end position="328"/>
    </location>
</feature>
<feature type="modified residue" description="N5-methylglutamine" evidence="1">
    <location>
        <position position="230"/>
    </location>
</feature>